<feature type="chain" id="PRO_0000405339" description="Multidrug transporter MdfA">
    <location>
        <begin position="1"/>
        <end position="409"/>
    </location>
</feature>
<feature type="topological domain" description="Cytoplasmic" evidence="2">
    <location>
        <begin position="1"/>
        <end position="15"/>
    </location>
</feature>
<feature type="transmembrane region" description="Helical" evidence="2">
    <location>
        <begin position="16"/>
        <end position="36"/>
    </location>
</feature>
<feature type="topological domain" description="Periplasmic" evidence="2">
    <location>
        <begin position="37"/>
        <end position="52"/>
    </location>
</feature>
<feature type="transmembrane region" description="Helical" evidence="2">
    <location>
        <begin position="53"/>
        <end position="73"/>
    </location>
</feature>
<feature type="topological domain" description="Cytoplasmic" evidence="2">
    <location>
        <begin position="74"/>
        <end position="82"/>
    </location>
</feature>
<feature type="transmembrane region" description="Helical" evidence="2">
    <location>
        <begin position="83"/>
        <end position="103"/>
    </location>
</feature>
<feature type="topological domain" description="Periplasmic" evidence="2">
    <location>
        <begin position="104"/>
        <end position="107"/>
    </location>
</feature>
<feature type="transmembrane region" description="Helical" evidence="2">
    <location>
        <begin position="108"/>
        <end position="128"/>
    </location>
</feature>
<feature type="topological domain" description="Cytoplasmic" evidence="2">
    <location>
        <begin position="129"/>
        <end position="144"/>
    </location>
</feature>
<feature type="transmembrane region" description="Helical" evidence="2">
    <location>
        <begin position="145"/>
        <end position="165"/>
    </location>
</feature>
<feature type="topological domain" description="Periplasmic" evidence="2">
    <location>
        <begin position="166"/>
        <end position="168"/>
    </location>
</feature>
<feature type="transmembrane region" description="Helical" evidence="2">
    <location>
        <begin position="169"/>
        <end position="189"/>
    </location>
</feature>
<feature type="topological domain" description="Cytoplasmic" evidence="2">
    <location>
        <begin position="190"/>
        <end position="226"/>
    </location>
</feature>
<feature type="transmembrane region" description="Helical" evidence="2">
    <location>
        <begin position="227"/>
        <end position="247"/>
    </location>
</feature>
<feature type="topological domain" description="Periplasmic" evidence="2">
    <location>
        <begin position="248"/>
        <end position="254"/>
    </location>
</feature>
<feature type="transmembrane region" description="Helical" evidence="2">
    <location>
        <begin position="255"/>
        <end position="275"/>
    </location>
</feature>
<feature type="topological domain" description="Cytoplasmic" evidence="2">
    <location>
        <begin position="276"/>
        <end position="286"/>
    </location>
</feature>
<feature type="transmembrane region" description="Helical" evidence="2">
    <location>
        <begin position="287"/>
        <end position="307"/>
    </location>
</feature>
<feature type="topological domain" description="Periplasmic" evidence="2">
    <location>
        <begin position="308"/>
        <end position="314"/>
    </location>
</feature>
<feature type="transmembrane region" description="Helical" evidence="2">
    <location>
        <begin position="315"/>
        <end position="335"/>
    </location>
</feature>
<feature type="topological domain" description="Cytoplasmic" evidence="2">
    <location>
        <begin position="336"/>
        <end position="347"/>
    </location>
</feature>
<feature type="transmembrane region" description="Helical" evidence="2">
    <location>
        <begin position="348"/>
        <end position="368"/>
    </location>
</feature>
<feature type="topological domain" description="Periplasmic" evidence="2">
    <location>
        <begin position="369"/>
        <end position="378"/>
    </location>
</feature>
<feature type="transmembrane region" description="Helical" evidence="2">
    <location>
        <begin position="379"/>
        <end position="399"/>
    </location>
</feature>
<feature type="topological domain" description="Cytoplasmic" evidence="2">
    <location>
        <begin position="400"/>
        <end position="409"/>
    </location>
</feature>
<proteinExistence type="inferred from homology"/>
<comment type="function">
    <text evidence="1">Efflux pump driven by the proton motive force. Confers resistance to a broad spectrum of chemically unrelated drugs (By similarity).</text>
</comment>
<comment type="subunit">
    <text evidence="1">Monomer.</text>
</comment>
<comment type="subcellular location">
    <subcellularLocation>
        <location evidence="1">Cell inner membrane</location>
        <topology evidence="1">Multi-pass membrane protein</topology>
    </subcellularLocation>
</comment>
<comment type="similarity">
    <text evidence="3">Belongs to the major facilitator superfamily. MdfA family.</text>
</comment>
<comment type="sequence caution" evidence="3">
    <conflict type="erroneous initiation">
        <sequence resource="EMBL-CDS" id="ACY60466"/>
    </conflict>
    <text>Truncated N-terminus.</text>
</comment>
<reference key="1">
    <citation type="journal article" date="2009" name="Am. J. Trop. Med. Hyg.">
        <title>Spatial variation of Yersinia pestis from Yunnan Province of China.</title>
        <authorList>
            <person name="Zhang Z."/>
            <person name="Hai R."/>
            <person name="Song Z."/>
            <person name="Xia L."/>
            <person name="Liang Y."/>
            <person name="Cai H."/>
            <person name="Liang Y."/>
            <person name="Shen X."/>
            <person name="Zhang E."/>
            <person name="Xu J."/>
            <person name="Yu D."/>
            <person name="Yu X.J."/>
        </authorList>
    </citation>
    <scope>NUCLEOTIDE SEQUENCE [LARGE SCALE GENOMIC DNA]</scope>
    <source>
        <strain>D106004</strain>
    </source>
</reference>
<keyword id="KW-0046">Antibiotic resistance</keyword>
<keyword id="KW-0997">Cell inner membrane</keyword>
<keyword id="KW-1003">Cell membrane</keyword>
<keyword id="KW-0472">Membrane</keyword>
<keyword id="KW-0812">Transmembrane</keyword>
<keyword id="KW-1133">Transmembrane helix</keyword>
<keyword id="KW-0813">Transport</keyword>
<accession>D0JKF6</accession>
<sequence>MQTSFSPATRLGRRALLFPLCLVLFEFAAYIANDMIQPGMLAVVAEFNASVEWVPTSMTAYLAGGMFLQWLLGPLSDRRGRRPVMLAGVAFFVVTCLAILLVNSIEQFIAMRFLQGIGLCFIGAVGYATIQESFEEAVCIKITALMANVALIAPLLGPLAGAALIHVAPWQTMFVLFAVLGAISFAGLWRAMPETASLKGEKLSVANMWRDYKQVLANRRFLCGSLALGFASLPLLAWIAQSPVILISGEQLSTFEYGILQVPIFGALIIGNLTLARLSGKTSIPQLIRYGAGPMIVGLMIAAGSTLYSSHAYLWMTAGLSLYAFGIGLANAGLVRLTLFASDISKGTVSAAMGMISMMIFTLGIELAKVAYLWGDSRGFNLFNLMSGLLWLGLVMVFIRRQPEAVATE</sequence>
<evidence type="ECO:0000250" key="1"/>
<evidence type="ECO:0000255" key="2"/>
<evidence type="ECO:0000305" key="3"/>
<name>MDFA_YERPD</name>
<dbReference type="EMBL" id="CP001585">
    <property type="protein sequence ID" value="ACY60466.1"/>
    <property type="status" value="ALT_INIT"/>
    <property type="molecule type" value="Genomic_DNA"/>
</dbReference>
<dbReference type="RefSeq" id="WP_002215753.1">
    <property type="nucleotide sequence ID" value="NC_017154.1"/>
</dbReference>
<dbReference type="SMR" id="D0JKF6"/>
<dbReference type="KEGG" id="ypd:YPD4_3562"/>
<dbReference type="PATRIC" id="fig|637382.3.peg.4723"/>
<dbReference type="HOGENOM" id="CLU_001265_47_2_6"/>
<dbReference type="GO" id="GO:0005886">
    <property type="term" value="C:plasma membrane"/>
    <property type="evidence" value="ECO:0007669"/>
    <property type="project" value="UniProtKB-SubCell"/>
</dbReference>
<dbReference type="GO" id="GO:0015385">
    <property type="term" value="F:sodium:proton antiporter activity"/>
    <property type="evidence" value="ECO:0007669"/>
    <property type="project" value="TreeGrafter"/>
</dbReference>
<dbReference type="GO" id="GO:0046677">
    <property type="term" value="P:response to antibiotic"/>
    <property type="evidence" value="ECO:0007669"/>
    <property type="project" value="UniProtKB-KW"/>
</dbReference>
<dbReference type="GO" id="GO:1990961">
    <property type="term" value="P:xenobiotic detoxification by transmembrane export across the plasma membrane"/>
    <property type="evidence" value="ECO:0007669"/>
    <property type="project" value="TreeGrafter"/>
</dbReference>
<dbReference type="CDD" id="cd17320">
    <property type="entry name" value="MFS_MdfA_MDR_like"/>
    <property type="match status" value="1"/>
</dbReference>
<dbReference type="Gene3D" id="1.20.1720.10">
    <property type="entry name" value="Multidrug resistance protein D"/>
    <property type="match status" value="1"/>
</dbReference>
<dbReference type="InterPro" id="IPR011701">
    <property type="entry name" value="MFS"/>
</dbReference>
<dbReference type="InterPro" id="IPR020846">
    <property type="entry name" value="MFS_dom"/>
</dbReference>
<dbReference type="InterPro" id="IPR036259">
    <property type="entry name" value="MFS_trans_sf"/>
</dbReference>
<dbReference type="NCBIfam" id="NF011931">
    <property type="entry name" value="PRK15402.1"/>
    <property type="match status" value="1"/>
</dbReference>
<dbReference type="PANTHER" id="PTHR23502">
    <property type="entry name" value="MAJOR FACILITATOR SUPERFAMILY"/>
    <property type="match status" value="1"/>
</dbReference>
<dbReference type="PANTHER" id="PTHR23502:SF43">
    <property type="entry name" value="MULTIDRUG TRANSPORTER MDFA"/>
    <property type="match status" value="1"/>
</dbReference>
<dbReference type="Pfam" id="PF07690">
    <property type="entry name" value="MFS_1"/>
    <property type="match status" value="1"/>
</dbReference>
<dbReference type="SUPFAM" id="SSF103473">
    <property type="entry name" value="MFS general substrate transporter"/>
    <property type="match status" value="1"/>
</dbReference>
<dbReference type="PROSITE" id="PS50850">
    <property type="entry name" value="MFS"/>
    <property type="match status" value="1"/>
</dbReference>
<gene>
    <name type="primary">mdfA</name>
    <name type="ordered locus">YPD4_3562</name>
</gene>
<protein>
    <recommendedName>
        <fullName>Multidrug transporter MdfA</fullName>
    </recommendedName>
</protein>
<organism>
    <name type="scientific">Yersinia pestis (strain D106004)</name>
    <dbReference type="NCBI Taxonomy" id="637382"/>
    <lineage>
        <taxon>Bacteria</taxon>
        <taxon>Pseudomonadati</taxon>
        <taxon>Pseudomonadota</taxon>
        <taxon>Gammaproteobacteria</taxon>
        <taxon>Enterobacterales</taxon>
        <taxon>Yersiniaceae</taxon>
        <taxon>Yersinia</taxon>
    </lineage>
</organism>